<name>EFG_CLOBM</name>
<evidence type="ECO:0000255" key="1">
    <source>
        <dbReference type="HAMAP-Rule" id="MF_00054"/>
    </source>
</evidence>
<feature type="chain" id="PRO_0000335842" description="Elongation factor G">
    <location>
        <begin position="1"/>
        <end position="689"/>
    </location>
</feature>
<feature type="domain" description="tr-type G">
    <location>
        <begin position="9"/>
        <end position="283"/>
    </location>
</feature>
<feature type="binding site" evidence="1">
    <location>
        <begin position="18"/>
        <end position="25"/>
    </location>
    <ligand>
        <name>GTP</name>
        <dbReference type="ChEBI" id="CHEBI:37565"/>
    </ligand>
</feature>
<feature type="binding site" evidence="1">
    <location>
        <begin position="82"/>
        <end position="86"/>
    </location>
    <ligand>
        <name>GTP</name>
        <dbReference type="ChEBI" id="CHEBI:37565"/>
    </ligand>
</feature>
<feature type="binding site" evidence="1">
    <location>
        <begin position="136"/>
        <end position="139"/>
    </location>
    <ligand>
        <name>GTP</name>
        <dbReference type="ChEBI" id="CHEBI:37565"/>
    </ligand>
</feature>
<gene>
    <name evidence="1" type="primary">fusA</name>
    <name type="ordered locus">CLK_2927</name>
</gene>
<protein>
    <recommendedName>
        <fullName evidence="1">Elongation factor G</fullName>
        <shortName evidence="1">EF-G</shortName>
    </recommendedName>
</protein>
<reference key="1">
    <citation type="journal article" date="2007" name="PLoS ONE">
        <title>Analysis of the neurotoxin complex genes in Clostridium botulinum A1-A4 and B1 strains: BoNT/A3, /Ba4 and /B1 clusters are located within plasmids.</title>
        <authorList>
            <person name="Smith T.J."/>
            <person name="Hill K.K."/>
            <person name="Foley B.T."/>
            <person name="Detter J.C."/>
            <person name="Munk A.C."/>
            <person name="Bruce D.C."/>
            <person name="Doggett N.A."/>
            <person name="Smith L.A."/>
            <person name="Marks J.D."/>
            <person name="Xie G."/>
            <person name="Brettin T.S."/>
        </authorList>
    </citation>
    <scope>NUCLEOTIDE SEQUENCE [LARGE SCALE GENOMIC DNA]</scope>
    <source>
        <strain>Loch Maree / Type A3</strain>
    </source>
</reference>
<accession>B1KSM8</accession>
<sequence>MANKEYPLAKFRNIGIMAHIDAGKTTATERILFYTGKTHKIGETHEGGATMDWMEQEQERGITITSAATTCFWKDHQVNIIDTPGHVDFTVEVERSLRVLDGAVTILDAKSGVEPQTETVWRQADNYKVPRMVFINKMDKLGADFLMSVGTLRERLHANAVPLQLPIGAEDSFSGIIDLVKNDAVIYKDDLGTVMDETEIPEDMKEIAEEYRTMLLEAVAEVDEDIMMKYLEGEEISVEEIKTALRHGVIANKIVPVLCGSAYKNKGVQLLLDAIVEFMPSPLDIEDVKGTEPTTGEEMTRPADAKAPLAALAFKIATDPFIGKLAFTRIYSGTMKSGTYVFNSNKGKRERIGRLVKMHANHREEVDELKAGELGAIVGLKDTTTGDTLCDDANPIILENMEFPEPVIDVSIEPKTKAGQEKMGIALAKLAEEDPTFRTYTNQETGQTIIAGMGELHLEIIVDRLIREFKVECNVGQPQVAYKETVRKHVKAEGKFVRQSGGRGQYGHCWIEMMPTEGEYEFDNAIVGGAIPKEYIPAIDNGIQEASQSGIIAGYPVINFKVKLVDGSYHDVDSSEMAFKIAGSMAFKNAMSKADAVLLEPSMKVEVVVPEEYMGDVIGDINSRRGRIEGMTPRAGAEVIRAFVPLSEMFGYATTLRSKTQGRGNYVMQFDHYEEVPKSIQDKVIGERK</sequence>
<proteinExistence type="inferred from homology"/>
<dbReference type="EMBL" id="CP000962">
    <property type="protein sequence ID" value="ACA57221.1"/>
    <property type="molecule type" value="Genomic_DNA"/>
</dbReference>
<dbReference type="RefSeq" id="WP_012344990.1">
    <property type="nucleotide sequence ID" value="NC_010520.1"/>
</dbReference>
<dbReference type="SMR" id="B1KSM8"/>
<dbReference type="KEGG" id="cbl:CLK_2927"/>
<dbReference type="HOGENOM" id="CLU_002794_4_1_9"/>
<dbReference type="GO" id="GO:0005737">
    <property type="term" value="C:cytoplasm"/>
    <property type="evidence" value="ECO:0007669"/>
    <property type="project" value="UniProtKB-SubCell"/>
</dbReference>
<dbReference type="GO" id="GO:0005525">
    <property type="term" value="F:GTP binding"/>
    <property type="evidence" value="ECO:0007669"/>
    <property type="project" value="UniProtKB-UniRule"/>
</dbReference>
<dbReference type="GO" id="GO:0003924">
    <property type="term" value="F:GTPase activity"/>
    <property type="evidence" value="ECO:0007669"/>
    <property type="project" value="InterPro"/>
</dbReference>
<dbReference type="GO" id="GO:0003746">
    <property type="term" value="F:translation elongation factor activity"/>
    <property type="evidence" value="ECO:0007669"/>
    <property type="project" value="UniProtKB-UniRule"/>
</dbReference>
<dbReference type="GO" id="GO:0032790">
    <property type="term" value="P:ribosome disassembly"/>
    <property type="evidence" value="ECO:0007669"/>
    <property type="project" value="TreeGrafter"/>
</dbReference>
<dbReference type="CDD" id="cd01886">
    <property type="entry name" value="EF-G"/>
    <property type="match status" value="1"/>
</dbReference>
<dbReference type="CDD" id="cd16262">
    <property type="entry name" value="EFG_III"/>
    <property type="match status" value="1"/>
</dbReference>
<dbReference type="CDD" id="cd01434">
    <property type="entry name" value="EFG_mtEFG1_IV"/>
    <property type="match status" value="1"/>
</dbReference>
<dbReference type="CDD" id="cd03713">
    <property type="entry name" value="EFG_mtEFG_C"/>
    <property type="match status" value="1"/>
</dbReference>
<dbReference type="CDD" id="cd04088">
    <property type="entry name" value="EFG_mtEFG_II"/>
    <property type="match status" value="1"/>
</dbReference>
<dbReference type="FunFam" id="2.40.30.10:FF:000006">
    <property type="entry name" value="Elongation factor G"/>
    <property type="match status" value="1"/>
</dbReference>
<dbReference type="FunFam" id="3.30.230.10:FF:000003">
    <property type="entry name" value="Elongation factor G"/>
    <property type="match status" value="1"/>
</dbReference>
<dbReference type="FunFam" id="3.30.70.240:FF:000001">
    <property type="entry name" value="Elongation factor G"/>
    <property type="match status" value="1"/>
</dbReference>
<dbReference type="FunFam" id="3.30.70.870:FF:000001">
    <property type="entry name" value="Elongation factor G"/>
    <property type="match status" value="1"/>
</dbReference>
<dbReference type="FunFam" id="3.40.50.300:FF:000029">
    <property type="entry name" value="Elongation factor G"/>
    <property type="match status" value="1"/>
</dbReference>
<dbReference type="Gene3D" id="3.30.230.10">
    <property type="match status" value="1"/>
</dbReference>
<dbReference type="Gene3D" id="3.30.70.240">
    <property type="match status" value="1"/>
</dbReference>
<dbReference type="Gene3D" id="3.30.70.870">
    <property type="entry name" value="Elongation Factor G (Translational Gtpase), domain 3"/>
    <property type="match status" value="1"/>
</dbReference>
<dbReference type="Gene3D" id="3.40.50.300">
    <property type="entry name" value="P-loop containing nucleotide triphosphate hydrolases"/>
    <property type="match status" value="1"/>
</dbReference>
<dbReference type="Gene3D" id="2.40.30.10">
    <property type="entry name" value="Translation factors"/>
    <property type="match status" value="1"/>
</dbReference>
<dbReference type="HAMAP" id="MF_00054_B">
    <property type="entry name" value="EF_G_EF_2_B"/>
    <property type="match status" value="1"/>
</dbReference>
<dbReference type="InterPro" id="IPR053905">
    <property type="entry name" value="EF-G-like_DII"/>
</dbReference>
<dbReference type="InterPro" id="IPR041095">
    <property type="entry name" value="EFG_II"/>
</dbReference>
<dbReference type="InterPro" id="IPR009022">
    <property type="entry name" value="EFG_III"/>
</dbReference>
<dbReference type="InterPro" id="IPR035647">
    <property type="entry name" value="EFG_III/V"/>
</dbReference>
<dbReference type="InterPro" id="IPR047872">
    <property type="entry name" value="EFG_IV"/>
</dbReference>
<dbReference type="InterPro" id="IPR035649">
    <property type="entry name" value="EFG_V"/>
</dbReference>
<dbReference type="InterPro" id="IPR000640">
    <property type="entry name" value="EFG_V-like"/>
</dbReference>
<dbReference type="InterPro" id="IPR031157">
    <property type="entry name" value="G_TR_CS"/>
</dbReference>
<dbReference type="InterPro" id="IPR027417">
    <property type="entry name" value="P-loop_NTPase"/>
</dbReference>
<dbReference type="InterPro" id="IPR020568">
    <property type="entry name" value="Ribosomal_Su5_D2-typ_SF"/>
</dbReference>
<dbReference type="InterPro" id="IPR014721">
    <property type="entry name" value="Ribsml_uS5_D2-typ_fold_subgr"/>
</dbReference>
<dbReference type="InterPro" id="IPR005225">
    <property type="entry name" value="Small_GTP-bd"/>
</dbReference>
<dbReference type="InterPro" id="IPR000795">
    <property type="entry name" value="T_Tr_GTP-bd_dom"/>
</dbReference>
<dbReference type="InterPro" id="IPR009000">
    <property type="entry name" value="Transl_B-barrel_sf"/>
</dbReference>
<dbReference type="InterPro" id="IPR004540">
    <property type="entry name" value="Transl_elong_EFG/EF2"/>
</dbReference>
<dbReference type="InterPro" id="IPR005517">
    <property type="entry name" value="Transl_elong_EFG/EF2_IV"/>
</dbReference>
<dbReference type="NCBIfam" id="TIGR00484">
    <property type="entry name" value="EF-G"/>
    <property type="match status" value="1"/>
</dbReference>
<dbReference type="NCBIfam" id="NF009379">
    <property type="entry name" value="PRK12740.1-3"/>
    <property type="match status" value="1"/>
</dbReference>
<dbReference type="NCBIfam" id="NF009381">
    <property type="entry name" value="PRK12740.1-5"/>
    <property type="match status" value="1"/>
</dbReference>
<dbReference type="NCBIfam" id="TIGR00231">
    <property type="entry name" value="small_GTP"/>
    <property type="match status" value="1"/>
</dbReference>
<dbReference type="PANTHER" id="PTHR43261:SF1">
    <property type="entry name" value="RIBOSOME-RELEASING FACTOR 2, MITOCHONDRIAL"/>
    <property type="match status" value="1"/>
</dbReference>
<dbReference type="PANTHER" id="PTHR43261">
    <property type="entry name" value="TRANSLATION ELONGATION FACTOR G-RELATED"/>
    <property type="match status" value="1"/>
</dbReference>
<dbReference type="Pfam" id="PF22042">
    <property type="entry name" value="EF-G_D2"/>
    <property type="match status" value="1"/>
</dbReference>
<dbReference type="Pfam" id="PF00679">
    <property type="entry name" value="EFG_C"/>
    <property type="match status" value="1"/>
</dbReference>
<dbReference type="Pfam" id="PF14492">
    <property type="entry name" value="EFG_III"/>
    <property type="match status" value="1"/>
</dbReference>
<dbReference type="Pfam" id="PF03764">
    <property type="entry name" value="EFG_IV"/>
    <property type="match status" value="1"/>
</dbReference>
<dbReference type="Pfam" id="PF00009">
    <property type="entry name" value="GTP_EFTU"/>
    <property type="match status" value="1"/>
</dbReference>
<dbReference type="PRINTS" id="PR00315">
    <property type="entry name" value="ELONGATNFCT"/>
</dbReference>
<dbReference type="SMART" id="SM00838">
    <property type="entry name" value="EFG_C"/>
    <property type="match status" value="1"/>
</dbReference>
<dbReference type="SMART" id="SM00889">
    <property type="entry name" value="EFG_IV"/>
    <property type="match status" value="1"/>
</dbReference>
<dbReference type="SUPFAM" id="SSF54980">
    <property type="entry name" value="EF-G C-terminal domain-like"/>
    <property type="match status" value="2"/>
</dbReference>
<dbReference type="SUPFAM" id="SSF52540">
    <property type="entry name" value="P-loop containing nucleoside triphosphate hydrolases"/>
    <property type="match status" value="1"/>
</dbReference>
<dbReference type="SUPFAM" id="SSF54211">
    <property type="entry name" value="Ribosomal protein S5 domain 2-like"/>
    <property type="match status" value="1"/>
</dbReference>
<dbReference type="SUPFAM" id="SSF50447">
    <property type="entry name" value="Translation proteins"/>
    <property type="match status" value="1"/>
</dbReference>
<dbReference type="PROSITE" id="PS00301">
    <property type="entry name" value="G_TR_1"/>
    <property type="match status" value="1"/>
</dbReference>
<dbReference type="PROSITE" id="PS51722">
    <property type="entry name" value="G_TR_2"/>
    <property type="match status" value="1"/>
</dbReference>
<comment type="function">
    <text evidence="1">Catalyzes the GTP-dependent ribosomal translocation step during translation elongation. During this step, the ribosome changes from the pre-translocational (PRE) to the post-translocational (POST) state as the newly formed A-site-bound peptidyl-tRNA and P-site-bound deacylated tRNA move to the P and E sites, respectively. Catalyzes the coordinated movement of the two tRNA molecules, the mRNA and conformational changes in the ribosome.</text>
</comment>
<comment type="subcellular location">
    <subcellularLocation>
        <location evidence="1">Cytoplasm</location>
    </subcellularLocation>
</comment>
<comment type="similarity">
    <text evidence="1">Belongs to the TRAFAC class translation factor GTPase superfamily. Classic translation factor GTPase family. EF-G/EF-2 subfamily.</text>
</comment>
<keyword id="KW-0963">Cytoplasm</keyword>
<keyword id="KW-0251">Elongation factor</keyword>
<keyword id="KW-0342">GTP-binding</keyword>
<keyword id="KW-0547">Nucleotide-binding</keyword>
<keyword id="KW-0648">Protein biosynthesis</keyword>
<organism>
    <name type="scientific">Clostridium botulinum (strain Loch Maree / Type A3)</name>
    <dbReference type="NCBI Taxonomy" id="498214"/>
    <lineage>
        <taxon>Bacteria</taxon>
        <taxon>Bacillati</taxon>
        <taxon>Bacillota</taxon>
        <taxon>Clostridia</taxon>
        <taxon>Eubacteriales</taxon>
        <taxon>Clostridiaceae</taxon>
        <taxon>Clostridium</taxon>
    </lineage>
</organism>